<accession>B6DCY2</accession>
<proteinExistence type="evidence at transcript level"/>
<feature type="signal peptide" evidence="2">
    <location>
        <begin position="1"/>
        <end position="20"/>
    </location>
</feature>
<feature type="propeptide" id="PRO_0000401783" evidence="1">
    <location>
        <begin position="21"/>
        <end position="26"/>
    </location>
</feature>
<feature type="chain" id="PRO_0000401784" description="U8-lycotoxin-Ls1b">
    <location>
        <begin position="27"/>
        <end position="77"/>
    </location>
</feature>
<dbReference type="EMBL" id="EU926066">
    <property type="protein sequence ID" value="ACI41398.1"/>
    <property type="molecule type" value="mRNA"/>
</dbReference>
<dbReference type="EMBL" id="FM864070">
    <property type="protein sequence ID" value="CAS03667.1"/>
    <property type="molecule type" value="mRNA"/>
</dbReference>
<dbReference type="SMR" id="B6DCY2"/>
<dbReference type="ArachnoServer" id="AS001005">
    <property type="toxin name" value="U8-lycotoxin-Ls1b"/>
</dbReference>
<dbReference type="GO" id="GO:0005576">
    <property type="term" value="C:extracellular region"/>
    <property type="evidence" value="ECO:0007669"/>
    <property type="project" value="UniProtKB-SubCell"/>
</dbReference>
<dbReference type="GO" id="GO:0090729">
    <property type="term" value="F:toxin activity"/>
    <property type="evidence" value="ECO:0007669"/>
    <property type="project" value="UniProtKB-KW"/>
</dbReference>
<dbReference type="InterPro" id="IPR019553">
    <property type="entry name" value="Spider_toxin_CSTX_knottin"/>
</dbReference>
<dbReference type="Pfam" id="PF10530">
    <property type="entry name" value="Toxin_35"/>
    <property type="match status" value="1"/>
</dbReference>
<organism>
    <name type="scientific">Lycosa singoriensis</name>
    <name type="common">Wolf spider</name>
    <name type="synonym">Aranea singoriensis</name>
    <dbReference type="NCBI Taxonomy" id="434756"/>
    <lineage>
        <taxon>Eukaryota</taxon>
        <taxon>Metazoa</taxon>
        <taxon>Ecdysozoa</taxon>
        <taxon>Arthropoda</taxon>
        <taxon>Chelicerata</taxon>
        <taxon>Arachnida</taxon>
        <taxon>Araneae</taxon>
        <taxon>Araneomorphae</taxon>
        <taxon>Entelegynae</taxon>
        <taxon>Lycosoidea</taxon>
        <taxon>Lycosidae</taxon>
        <taxon>Lycosa</taxon>
    </lineage>
</organism>
<evidence type="ECO:0000250" key="1"/>
<evidence type="ECO:0000255" key="2"/>
<evidence type="ECO:0000305" key="3"/>
<name>TX811_LYCSI</name>
<keyword id="KW-1015">Disulfide bond</keyword>
<keyword id="KW-0964">Secreted</keyword>
<keyword id="KW-0732">Signal</keyword>
<keyword id="KW-0800">Toxin</keyword>
<protein>
    <recommendedName>
        <fullName>U8-lycotoxin-Ls1b</fullName>
    </recommendedName>
    <alternativeName>
        <fullName>Toxin-like structure LSTX-H11</fullName>
    </alternativeName>
</protein>
<comment type="subcellular location">
    <subcellularLocation>
        <location evidence="1">Secreted</location>
    </subcellularLocation>
</comment>
<comment type="tissue specificity">
    <text>Expressed by the venom gland.</text>
</comment>
<comment type="PTM">
    <text evidence="1">Contains 4 disulfide bonds.</text>
</comment>
<comment type="similarity">
    <text evidence="3">Belongs to the neurotoxin 19 (CSTX) family. 08 (U8-Lctx) subfamily.</text>
</comment>
<reference key="1">
    <citation type="journal article" date="2010" name="Zoology">
        <title>Transcriptome analysis of the venom glands of the Chinese wolf spider Lycosa singoriensis.</title>
        <authorList>
            <person name="Zhang Y."/>
            <person name="Chen J."/>
            <person name="Tang X."/>
            <person name="Wang F."/>
            <person name="Jiang L."/>
            <person name="Xiong X."/>
            <person name="Wang M."/>
            <person name="Rong M."/>
            <person name="Liu Z."/>
            <person name="Liang S."/>
        </authorList>
    </citation>
    <scope>NUCLEOTIDE SEQUENCE [LARGE SCALE MRNA]</scope>
    <source>
        <tissue>Venom gland</tissue>
    </source>
</reference>
<sequence>MKLIIFTGLVLFAIVSLIEAQAENEKACLPQYQVCTDAPGNCCSNLVCDCYGRYKSGARIGRNCFCLQKGVIYKREN</sequence>